<gene>
    <name type="ORF">DDB_G0267482</name>
</gene>
<organism>
    <name type="scientific">Dictyostelium discoideum</name>
    <name type="common">Social amoeba</name>
    <dbReference type="NCBI Taxonomy" id="44689"/>
    <lineage>
        <taxon>Eukaryota</taxon>
        <taxon>Amoebozoa</taxon>
        <taxon>Evosea</taxon>
        <taxon>Eumycetozoa</taxon>
        <taxon>Dictyostelia</taxon>
        <taxon>Dictyosteliales</taxon>
        <taxon>Dictyosteliaceae</taxon>
        <taxon>Dictyostelium</taxon>
    </lineage>
</organism>
<evidence type="ECO:0000255" key="1"/>
<evidence type="ECO:0000305" key="2"/>
<accession>Q55GW4</accession>
<reference key="1">
    <citation type="journal article" date="2005" name="Nature">
        <title>The genome of the social amoeba Dictyostelium discoideum.</title>
        <authorList>
            <person name="Eichinger L."/>
            <person name="Pachebat J.A."/>
            <person name="Gloeckner G."/>
            <person name="Rajandream M.A."/>
            <person name="Sucgang R."/>
            <person name="Berriman M."/>
            <person name="Song J."/>
            <person name="Olsen R."/>
            <person name="Szafranski K."/>
            <person name="Xu Q."/>
            <person name="Tunggal B."/>
            <person name="Kummerfeld S."/>
            <person name="Madera M."/>
            <person name="Konfortov B.A."/>
            <person name="Rivero F."/>
            <person name="Bankier A.T."/>
            <person name="Lehmann R."/>
            <person name="Hamlin N."/>
            <person name="Davies R."/>
            <person name="Gaudet P."/>
            <person name="Fey P."/>
            <person name="Pilcher K."/>
            <person name="Chen G."/>
            <person name="Saunders D."/>
            <person name="Sodergren E.J."/>
            <person name="Davis P."/>
            <person name="Kerhornou A."/>
            <person name="Nie X."/>
            <person name="Hall N."/>
            <person name="Anjard C."/>
            <person name="Hemphill L."/>
            <person name="Bason N."/>
            <person name="Farbrother P."/>
            <person name="Desany B."/>
            <person name="Just E."/>
            <person name="Morio T."/>
            <person name="Rost R."/>
            <person name="Churcher C.M."/>
            <person name="Cooper J."/>
            <person name="Haydock S."/>
            <person name="van Driessche N."/>
            <person name="Cronin A."/>
            <person name="Goodhead I."/>
            <person name="Muzny D.M."/>
            <person name="Mourier T."/>
            <person name="Pain A."/>
            <person name="Lu M."/>
            <person name="Harper D."/>
            <person name="Lindsay R."/>
            <person name="Hauser H."/>
            <person name="James K.D."/>
            <person name="Quiles M."/>
            <person name="Madan Babu M."/>
            <person name="Saito T."/>
            <person name="Buchrieser C."/>
            <person name="Wardroper A."/>
            <person name="Felder M."/>
            <person name="Thangavelu M."/>
            <person name="Johnson D."/>
            <person name="Knights A."/>
            <person name="Loulseged H."/>
            <person name="Mungall K.L."/>
            <person name="Oliver K."/>
            <person name="Price C."/>
            <person name="Quail M.A."/>
            <person name="Urushihara H."/>
            <person name="Hernandez J."/>
            <person name="Rabbinowitsch E."/>
            <person name="Steffen D."/>
            <person name="Sanders M."/>
            <person name="Ma J."/>
            <person name="Kohara Y."/>
            <person name="Sharp S."/>
            <person name="Simmonds M.N."/>
            <person name="Spiegler S."/>
            <person name="Tivey A."/>
            <person name="Sugano S."/>
            <person name="White B."/>
            <person name="Walker D."/>
            <person name="Woodward J.R."/>
            <person name="Winckler T."/>
            <person name="Tanaka Y."/>
            <person name="Shaulsky G."/>
            <person name="Schleicher M."/>
            <person name="Weinstock G.M."/>
            <person name="Rosenthal A."/>
            <person name="Cox E.C."/>
            <person name="Chisholm R.L."/>
            <person name="Gibbs R.A."/>
            <person name="Loomis W.F."/>
            <person name="Platzer M."/>
            <person name="Kay R.R."/>
            <person name="Williams J.G."/>
            <person name="Dear P.H."/>
            <person name="Noegel A.A."/>
            <person name="Barrell B.G."/>
            <person name="Kuspa A."/>
        </authorList>
    </citation>
    <scope>NUCLEOTIDE SEQUENCE [LARGE SCALE GENOMIC DNA]</scope>
    <source>
        <strain>AX4</strain>
    </source>
</reference>
<proteinExistence type="predicted"/>
<dbReference type="EMBL" id="AAFI02000003">
    <property type="protein sequence ID" value="EAL73194.1"/>
    <property type="molecule type" value="Genomic_DNA"/>
</dbReference>
<dbReference type="RefSeq" id="XP_647070.1">
    <property type="nucleotide sequence ID" value="XM_641978.1"/>
</dbReference>
<dbReference type="SMR" id="Q55GW4"/>
<dbReference type="PaxDb" id="44689-DDB0189317"/>
<dbReference type="EnsemblProtists" id="EAL73194">
    <property type="protein sequence ID" value="EAL73194"/>
    <property type="gene ID" value="DDB_G0267482"/>
</dbReference>
<dbReference type="GeneID" id="8615874"/>
<dbReference type="KEGG" id="ddi:DDB_G0267482"/>
<dbReference type="dictyBase" id="DDB_G0267482"/>
<dbReference type="VEuPathDB" id="AmoebaDB:DDB_G0267482"/>
<dbReference type="eggNOG" id="ENOG502RIQ4">
    <property type="taxonomic scope" value="Eukaryota"/>
</dbReference>
<dbReference type="HOGENOM" id="CLU_2611029_0_0_1"/>
<dbReference type="InParanoid" id="Q55GW4"/>
<dbReference type="PRO" id="PR:Q55GW4"/>
<dbReference type="Proteomes" id="UP000002195">
    <property type="component" value="Chromosome 1"/>
</dbReference>
<dbReference type="GO" id="GO:0016020">
    <property type="term" value="C:membrane"/>
    <property type="evidence" value="ECO:0007669"/>
    <property type="project" value="UniProtKB-SubCell"/>
</dbReference>
<sequence length="79" mass="9093">MNGGAPTKIANFLHKSIVSVLALTSLGCGVFVISATADLLERRKKRREEEDRIINEFIENDKKRILEENLRQQQQQQQK</sequence>
<feature type="chain" id="PRO_0000348185" description="Putative uncharacterized protein DDB_G0267482">
    <location>
        <begin position="1"/>
        <end position="79"/>
    </location>
</feature>
<feature type="transmembrane region" description="Helical" evidence="1">
    <location>
        <begin position="15"/>
        <end position="37"/>
    </location>
</feature>
<keyword id="KW-0472">Membrane</keyword>
<keyword id="KW-1185">Reference proteome</keyword>
<keyword id="KW-0812">Transmembrane</keyword>
<keyword id="KW-1133">Transmembrane helix</keyword>
<protein>
    <recommendedName>
        <fullName>Putative uncharacterized protein DDB_G0267482</fullName>
    </recommendedName>
</protein>
<comment type="subcellular location">
    <subcellularLocation>
        <location evidence="2">Membrane</location>
        <topology evidence="2">Single-pass membrane protein</topology>
    </subcellularLocation>
</comment>
<name>Y9317_DICDI</name>